<feature type="chain" id="PRO_0000308450" description="Processive diacylglycerol beta-glucosyltransferase">
    <location>
        <begin position="1"/>
        <end position="388"/>
    </location>
</feature>
<dbReference type="EC" id="2.4.1.315"/>
<dbReference type="EMBL" id="CP000001">
    <property type="protein sequence ID" value="AAU19817.1"/>
    <property type="molecule type" value="Genomic_DNA"/>
</dbReference>
<dbReference type="RefSeq" id="WP_000594707.1">
    <property type="nucleotide sequence ID" value="NC_006274.1"/>
</dbReference>
<dbReference type="SMR" id="Q63GD0"/>
<dbReference type="CAZy" id="GT28">
    <property type="family name" value="Glycosyltransferase Family 28"/>
</dbReference>
<dbReference type="KEGG" id="bcz:BCE33L0422"/>
<dbReference type="PATRIC" id="fig|288681.22.peg.5180"/>
<dbReference type="UniPathway" id="UPA00894"/>
<dbReference type="Proteomes" id="UP000002612">
    <property type="component" value="Chromosome"/>
</dbReference>
<dbReference type="GO" id="GO:0005886">
    <property type="term" value="C:plasma membrane"/>
    <property type="evidence" value="ECO:0007669"/>
    <property type="project" value="UniProtKB-SubCell"/>
</dbReference>
<dbReference type="GO" id="GO:0047228">
    <property type="term" value="F:1,2-diacylglycerol 3-glucosyltransferase activity"/>
    <property type="evidence" value="ECO:0007669"/>
    <property type="project" value="UniProtKB-UniRule"/>
</dbReference>
<dbReference type="GO" id="GO:0009246">
    <property type="term" value="P:enterobacterial common antigen biosynthetic process"/>
    <property type="evidence" value="ECO:0007669"/>
    <property type="project" value="UniProtKB-UniPathway"/>
</dbReference>
<dbReference type="GO" id="GO:0009247">
    <property type="term" value="P:glycolipid biosynthetic process"/>
    <property type="evidence" value="ECO:0007669"/>
    <property type="project" value="UniProtKB-UniRule"/>
</dbReference>
<dbReference type="GO" id="GO:0070395">
    <property type="term" value="P:lipoteichoic acid biosynthetic process"/>
    <property type="evidence" value="ECO:0007669"/>
    <property type="project" value="UniProtKB-UniRule"/>
</dbReference>
<dbReference type="CDD" id="cd17507">
    <property type="entry name" value="GT28_Beta-DGS-like"/>
    <property type="match status" value="1"/>
</dbReference>
<dbReference type="Gene3D" id="3.40.50.2000">
    <property type="entry name" value="Glycogen Phosphorylase B"/>
    <property type="match status" value="1"/>
</dbReference>
<dbReference type="HAMAP" id="MF_01280">
    <property type="entry name" value="Diacylglyc_glucosyltr"/>
    <property type="match status" value="1"/>
</dbReference>
<dbReference type="InterPro" id="IPR009695">
    <property type="entry name" value="Diacylglyc_glucosyltr_N"/>
</dbReference>
<dbReference type="InterPro" id="IPR007235">
    <property type="entry name" value="Glyco_trans_28_C"/>
</dbReference>
<dbReference type="InterPro" id="IPR050519">
    <property type="entry name" value="Glycosyltransf_28_UgtP"/>
</dbReference>
<dbReference type="InterPro" id="IPR023589">
    <property type="entry name" value="Pro_diacylglycrl_glcsylTrfase"/>
</dbReference>
<dbReference type="NCBIfam" id="NF010135">
    <property type="entry name" value="PRK13609.1"/>
    <property type="match status" value="1"/>
</dbReference>
<dbReference type="PANTHER" id="PTHR43025">
    <property type="entry name" value="MONOGALACTOSYLDIACYLGLYCEROL SYNTHASE"/>
    <property type="match status" value="1"/>
</dbReference>
<dbReference type="PANTHER" id="PTHR43025:SF3">
    <property type="entry name" value="MONOGALACTOSYLDIACYLGLYCEROL SYNTHASE 1, CHLOROPLASTIC"/>
    <property type="match status" value="1"/>
</dbReference>
<dbReference type="Pfam" id="PF04101">
    <property type="entry name" value="Glyco_tran_28_C"/>
    <property type="match status" value="1"/>
</dbReference>
<dbReference type="Pfam" id="PF06925">
    <property type="entry name" value="MGDG_synth"/>
    <property type="match status" value="1"/>
</dbReference>
<dbReference type="SUPFAM" id="SSF53756">
    <property type="entry name" value="UDP-Glycosyltransferase/glycogen phosphorylase"/>
    <property type="match status" value="1"/>
</dbReference>
<organism>
    <name type="scientific">Bacillus cereus (strain ZK / E33L)</name>
    <dbReference type="NCBI Taxonomy" id="288681"/>
    <lineage>
        <taxon>Bacteria</taxon>
        <taxon>Bacillati</taxon>
        <taxon>Bacillota</taxon>
        <taxon>Bacilli</taxon>
        <taxon>Bacillales</taxon>
        <taxon>Bacillaceae</taxon>
        <taxon>Bacillus</taxon>
        <taxon>Bacillus cereus group</taxon>
    </lineage>
</organism>
<sequence>MIKNPKVLILTAHYGNGHVQVAKTLEQTFRQKGIKDVIVCDLFGESHPVITDITKYLYLKSYTIGKELYRLFYYGVEKIYDKKIASWYANFGRKRLKLLLQAEKPDIVINTFPIIAVPELKKQTGISIPVYNVLTDFCVHKIWIHREVDRYFVATDHVKKVMVDIGVPAEQIVETGIPIRSSFELKINPDIIYNKYQLCKNKKILLIVAGAHGVLGSVKELCQSFMSVPDLQVVVVCGKNEALKQDLVGVQETNPDALKVFGYVENIDELFRVTSCMITKPGGITLSEAAALQVPVILYKPVPGQENENAMYFERKGAAVVIRDDSEVFAKTEALLKDDMKLLQMKEAMKSIYRPEPADHIVDTILAENHVEPNHIPIKSPALAQSFT</sequence>
<name>UGTP_BACCZ</name>
<protein>
    <recommendedName>
        <fullName evidence="1">Processive diacylglycerol beta-glucosyltransferase</fullName>
        <ecNumber>2.4.1.315</ecNumber>
    </recommendedName>
    <alternativeName>
        <fullName evidence="1">Beta-diglucosyldiacylglycerol synthase</fullName>
        <shortName evidence="1">Beta-DGS</shortName>
        <shortName evidence="1">DGlcDAG synthase</shortName>
        <shortName evidence="1">Glc2-DAG synthase</shortName>
    </alternativeName>
    <alternativeName>
        <fullName evidence="1">Beta-gentiobiosyldiacylglycerol synthase</fullName>
    </alternativeName>
    <alternativeName>
        <fullName evidence="1">Beta-monoglucosyldiacylglycerol synthase</fullName>
        <shortName evidence="1">Beta-MGS</shortName>
        <shortName evidence="1">MGlcDAG synthase</shortName>
    </alternativeName>
    <alternativeName>
        <fullName evidence="1">Beta-triglucosyldiacylglycerol synthase</fullName>
        <shortName evidence="1">TGlcDAG synthase</shortName>
    </alternativeName>
    <alternativeName>
        <fullName>Diglucosyl diacylglycerol synthase (1,6-linking)</fullName>
    </alternativeName>
    <alternativeName>
        <fullName evidence="1">Glucosyl-beta-1,6-glucosyldiacylglycerol synthase</fullName>
    </alternativeName>
    <alternativeName>
        <fullName evidence="1">UDP glucosyltransferase</fullName>
    </alternativeName>
    <alternativeName>
        <fullName evidence="1">UDP-glucose:1,2-diacylglycerol-3-beta-D-glucosyltransferase</fullName>
    </alternativeName>
</protein>
<gene>
    <name evidence="1" type="primary">ugtP</name>
    <name type="ordered locus">BCE33L0422</name>
</gene>
<comment type="function">
    <text evidence="1">Processive glucosyltransferase involved in the biosynthesis of both the bilayer- and non-bilayer-forming membrane glucolipids. Is able to successively transfer up to three glucosyl residues to diacylglycerol (DAG), thereby catalyzing the formation of beta-monoglucosyl-DAG (3-O-(beta-D-glucopyranosyl)-1,2-diacyl-sn-glycerol), beta-diglucosyl-DAG (3-O-(beta-D-glucopyranosyl-beta-(1-&gt;6)-D-glucopyranosyl)-1,2-diacyl-sn-glycerol) and beta-triglucosyl-DAG (3-O-(beta-D-glucopyranosyl-beta-(1-&gt;6)-D-glucopyranosyl-beta-(1-&gt;6)-D-glucopyranosyl)-1,2-diacyl-sn-glycerol). Beta-diglucosyl-DAG is the predominant glycolipid found in Bacillales and is also used as a membrane anchor for lipoteichoic acid (LTA).</text>
</comment>
<comment type="catalytic activity">
    <reaction>
        <text>a 1,2-diacyl-3-O-(beta-D-glucopyranosyl)-sn-glycerol + UDP-alpha-D-glucose = a 1,2-diacyl-3-O-(beta-D-Glc-(1-&gt;6)-beta-D-Glc)-sn-glycerol + UDP + H(+)</text>
        <dbReference type="Rhea" id="RHEA:39031"/>
        <dbReference type="ChEBI" id="CHEBI:15378"/>
        <dbReference type="ChEBI" id="CHEBI:58223"/>
        <dbReference type="ChEBI" id="CHEBI:58885"/>
        <dbReference type="ChEBI" id="CHEBI:75799"/>
        <dbReference type="ChEBI" id="CHEBI:76264"/>
        <dbReference type="EC" id="2.4.1.315"/>
    </reaction>
</comment>
<comment type="catalytic activity">
    <reaction>
        <text>a 1,2-diacyl-3-O-(beta-D-Glc-(1-&gt;6)-beta-D-Glc)-sn-glycerol + UDP-alpha-D-glucose = a 1,2-diacyl-3-O-(beta-D-Glc-(1-&gt;6)-beta-D-Glc-(1-&gt;6)-beta-D-Glc)-sn-glycerol + UDP + H(+)</text>
        <dbReference type="Rhea" id="RHEA:39027"/>
        <dbReference type="ChEBI" id="CHEBI:15378"/>
        <dbReference type="ChEBI" id="CHEBI:58223"/>
        <dbReference type="ChEBI" id="CHEBI:58885"/>
        <dbReference type="ChEBI" id="CHEBI:76264"/>
        <dbReference type="ChEBI" id="CHEBI:76265"/>
        <dbReference type="EC" id="2.4.1.315"/>
    </reaction>
</comment>
<comment type="catalytic activity">
    <reaction evidence="1">
        <text>a 1,2-diacyl-sn-glycerol + UDP-alpha-D-glucose = a 1,2-diacyl-3-O-(beta-D-glucopyranosyl)-sn-glycerol + UDP + H(+)</text>
        <dbReference type="Rhea" id="RHEA:17285"/>
        <dbReference type="ChEBI" id="CHEBI:15378"/>
        <dbReference type="ChEBI" id="CHEBI:17815"/>
        <dbReference type="ChEBI" id="CHEBI:58223"/>
        <dbReference type="ChEBI" id="CHEBI:58885"/>
        <dbReference type="ChEBI" id="CHEBI:75799"/>
    </reaction>
</comment>
<comment type="pathway">
    <text evidence="1">Glycolipid metabolism; diglucosyl-diacylglycerol biosynthesis.</text>
</comment>
<comment type="subcellular location">
    <subcellularLocation>
        <location evidence="1">Cell membrane</location>
    </subcellularLocation>
</comment>
<comment type="similarity">
    <text evidence="1">Belongs to the glycosyltransferase 28 family. UgtP subfamily.</text>
</comment>
<accession>Q63GD0</accession>
<proteinExistence type="inferred from homology"/>
<reference key="1">
    <citation type="journal article" date="2006" name="J. Bacteriol.">
        <title>Pathogenomic sequence analysis of Bacillus cereus and Bacillus thuringiensis isolates closely related to Bacillus anthracis.</title>
        <authorList>
            <person name="Han C.S."/>
            <person name="Xie G."/>
            <person name="Challacombe J.F."/>
            <person name="Altherr M.R."/>
            <person name="Bhotika S.S."/>
            <person name="Bruce D."/>
            <person name="Campbell C.S."/>
            <person name="Campbell M.L."/>
            <person name="Chen J."/>
            <person name="Chertkov O."/>
            <person name="Cleland C."/>
            <person name="Dimitrijevic M."/>
            <person name="Doggett N.A."/>
            <person name="Fawcett J.J."/>
            <person name="Glavina T."/>
            <person name="Goodwin L.A."/>
            <person name="Hill K.K."/>
            <person name="Hitchcock P."/>
            <person name="Jackson P.J."/>
            <person name="Keim P."/>
            <person name="Kewalramani A.R."/>
            <person name="Longmire J."/>
            <person name="Lucas S."/>
            <person name="Malfatti S."/>
            <person name="McMurry K."/>
            <person name="Meincke L.J."/>
            <person name="Misra M."/>
            <person name="Moseman B.L."/>
            <person name="Mundt M."/>
            <person name="Munk A.C."/>
            <person name="Okinaka R.T."/>
            <person name="Parson-Quintana B."/>
            <person name="Reilly L.P."/>
            <person name="Richardson P."/>
            <person name="Robinson D.L."/>
            <person name="Rubin E."/>
            <person name="Saunders E."/>
            <person name="Tapia R."/>
            <person name="Tesmer J.G."/>
            <person name="Thayer N."/>
            <person name="Thompson L.S."/>
            <person name="Tice H."/>
            <person name="Ticknor L.O."/>
            <person name="Wills P.L."/>
            <person name="Brettin T.S."/>
            <person name="Gilna P."/>
        </authorList>
    </citation>
    <scope>NUCLEOTIDE SEQUENCE [LARGE SCALE GENOMIC DNA]</scope>
    <source>
        <strain>ZK / E33L</strain>
    </source>
</reference>
<keyword id="KW-0119">Carbohydrate metabolism</keyword>
<keyword id="KW-1003">Cell membrane</keyword>
<keyword id="KW-0328">Glycosyltransferase</keyword>
<keyword id="KW-0444">Lipid biosynthesis</keyword>
<keyword id="KW-0443">Lipid metabolism</keyword>
<keyword id="KW-0472">Membrane</keyword>
<keyword id="KW-0808">Transferase</keyword>
<evidence type="ECO:0000255" key="1">
    <source>
        <dbReference type="HAMAP-Rule" id="MF_01280"/>
    </source>
</evidence>